<comment type="function">
    <text>Acts in concert with the pectinesterase, in the ripening process. Is involved in cell wall metabolism, specifically in polyuronide degradation.</text>
</comment>
<comment type="catalytic activity">
    <reaction>
        <text>(1,4-alpha-D-galacturonosyl)n+m + H2O = (1,4-alpha-D-galacturonosyl)n + (1,4-alpha-D-galacturonosyl)m.</text>
        <dbReference type="EC" id="3.2.1.15"/>
    </reaction>
</comment>
<comment type="subcellular location">
    <subcellularLocation>
        <location>Secreted</location>
    </subcellularLocation>
    <subcellularLocation>
        <location>Secreted</location>
        <location>Cell wall</location>
    </subcellularLocation>
</comment>
<comment type="similarity">
    <text evidence="5">Belongs to the glycosyl hydrolase 28 family.</text>
</comment>
<name>PGLR_PRUPE</name>
<reference key="1">
    <citation type="journal article" date="1994" name="Plant Physiol.">
        <title>Peach (Prunus persica) endopolygalacturonase cDNA isolation and mRNA analysis in melting and nonmelting peach cultivars.</title>
        <authorList>
            <person name="Lester D.R."/>
            <person name="Speiers J."/>
            <person name="Orr G."/>
            <person name="Brady C.J."/>
        </authorList>
    </citation>
    <scope>NUCLEOTIDE SEQUENCE [MRNA]</scope>
    <source>
        <strain>cv. Flavorcrest</strain>
    </source>
</reference>
<sequence>MANRRSLFSLSLIFVFMINSAIASPLTYNVASLGAKADGKTDSTKAFLSAWAKACASMNPGVIYVPAGTFFLRDVVFSGPCKNNAITFRIAGTLVAPSDYRVIGNAANWIFFHHVNGVTISGGILDGQGTALWACKACHGESCPSGATTLGFSDSNNIVVSGLASLNSQMFHIVINDFQNVQMQGVRVSRSGNSPNTDGIHVQMSSGVTILNSKIATGDDCVSIGPGTSNLWIEGVACGPGHGISIGSLGKEQEEAGVQNVTVKTVTFSGTQNGLRIKSWGRPSTGFARNILFQHATMVNVENPIVIDQHYCPDNKGCPGQVSGVQISDVTYEDIHGTSATEVAVKFDCSPKHPCREIKLEDVKLTYKNQAAESSCSHADGTTEGVVQPTSCL</sequence>
<accession>P48979</accession>
<feature type="signal peptide" evidence="2">
    <location>
        <begin position="1"/>
        <end position="23"/>
    </location>
</feature>
<feature type="chain" id="PRO_0000024812" description="Polygalacturonase">
    <location>
        <begin position="24"/>
        <end position="393"/>
    </location>
</feature>
<feature type="repeat" description="PbH1 1" evidence="2">
    <location>
        <begin position="115"/>
        <end position="136"/>
    </location>
</feature>
<feature type="repeat" description="PbH1 2" evidence="2">
    <location>
        <begin position="178"/>
        <end position="204"/>
    </location>
</feature>
<feature type="repeat" description="PbH1 3" evidence="2">
    <location>
        <begin position="205"/>
        <end position="226"/>
    </location>
</feature>
<feature type="repeat" description="PbH1 4" evidence="2">
    <location>
        <begin position="228"/>
        <end position="248"/>
    </location>
</feature>
<feature type="repeat" description="PbH1 5" evidence="2">
    <location>
        <begin position="258"/>
        <end position="279"/>
    </location>
</feature>
<feature type="repeat" description="PbH1 6" evidence="2">
    <location>
        <begin position="288"/>
        <end position="309"/>
    </location>
</feature>
<feature type="active site" description="Proton donor" evidence="1">
    <location>
        <position position="219"/>
    </location>
</feature>
<feature type="active site" evidence="4">
    <location>
        <position position="242"/>
    </location>
</feature>
<feature type="glycosylation site" description="N-linked (GlcNAc...) asparagine" evidence="3">
    <location>
        <position position="260"/>
    </location>
</feature>
<feature type="disulfide bond" evidence="1">
    <location>
        <begin position="221"/>
        <end position="238"/>
    </location>
</feature>
<feature type="disulfide bond" evidence="1">
    <location>
        <begin position="349"/>
        <end position="355"/>
    </location>
</feature>
<feature type="disulfide bond" evidence="1">
    <location>
        <begin position="376"/>
        <end position="392"/>
    </location>
</feature>
<organism>
    <name type="scientific">Prunus persica</name>
    <name type="common">Peach</name>
    <name type="synonym">Amygdalus persica</name>
    <dbReference type="NCBI Taxonomy" id="3760"/>
    <lineage>
        <taxon>Eukaryota</taxon>
        <taxon>Viridiplantae</taxon>
        <taxon>Streptophyta</taxon>
        <taxon>Embryophyta</taxon>
        <taxon>Tracheophyta</taxon>
        <taxon>Spermatophyta</taxon>
        <taxon>Magnoliopsida</taxon>
        <taxon>eudicotyledons</taxon>
        <taxon>Gunneridae</taxon>
        <taxon>Pentapetalae</taxon>
        <taxon>rosids</taxon>
        <taxon>fabids</taxon>
        <taxon>Rosales</taxon>
        <taxon>Rosaceae</taxon>
        <taxon>Amygdaloideae</taxon>
        <taxon>Amygdaleae</taxon>
        <taxon>Prunus</taxon>
    </lineage>
</organism>
<proteinExistence type="evidence at transcript level"/>
<dbReference type="EC" id="3.2.1.15"/>
<dbReference type="EMBL" id="X76735">
    <property type="protein sequence ID" value="CAA54150.1"/>
    <property type="molecule type" value="mRNA"/>
</dbReference>
<dbReference type="PIR" id="S40123">
    <property type="entry name" value="S40123"/>
</dbReference>
<dbReference type="SMR" id="P48979"/>
<dbReference type="CAZy" id="GH28">
    <property type="family name" value="Glycoside Hydrolase Family 28"/>
</dbReference>
<dbReference type="eggNOG" id="ENOG502QRN7">
    <property type="taxonomic scope" value="Eukaryota"/>
</dbReference>
<dbReference type="BioCyc" id="MetaCyc:MONOMER-14862"/>
<dbReference type="GO" id="GO:0005576">
    <property type="term" value="C:extracellular region"/>
    <property type="evidence" value="ECO:0007669"/>
    <property type="project" value="UniProtKB-SubCell"/>
</dbReference>
<dbReference type="GO" id="GO:0004650">
    <property type="term" value="F:polygalacturonase activity"/>
    <property type="evidence" value="ECO:0007669"/>
    <property type="project" value="UniProtKB-EC"/>
</dbReference>
<dbReference type="GO" id="GO:0005975">
    <property type="term" value="P:carbohydrate metabolic process"/>
    <property type="evidence" value="ECO:0007669"/>
    <property type="project" value="InterPro"/>
</dbReference>
<dbReference type="GO" id="GO:0071555">
    <property type="term" value="P:cell wall organization"/>
    <property type="evidence" value="ECO:0007669"/>
    <property type="project" value="UniProtKB-KW"/>
</dbReference>
<dbReference type="GO" id="GO:0009835">
    <property type="term" value="P:fruit ripening"/>
    <property type="evidence" value="ECO:0007669"/>
    <property type="project" value="UniProtKB-KW"/>
</dbReference>
<dbReference type="FunFam" id="2.160.20.10:FF:000016">
    <property type="entry name" value="Polygalacturonase 7"/>
    <property type="match status" value="1"/>
</dbReference>
<dbReference type="Gene3D" id="2.160.20.10">
    <property type="entry name" value="Single-stranded right-handed beta-helix, Pectin lyase-like"/>
    <property type="match status" value="1"/>
</dbReference>
<dbReference type="InterPro" id="IPR000743">
    <property type="entry name" value="Glyco_hydro_28"/>
</dbReference>
<dbReference type="InterPro" id="IPR006626">
    <property type="entry name" value="PbH1"/>
</dbReference>
<dbReference type="InterPro" id="IPR012334">
    <property type="entry name" value="Pectin_lyas_fold"/>
</dbReference>
<dbReference type="InterPro" id="IPR011050">
    <property type="entry name" value="Pectin_lyase_fold/virulence"/>
</dbReference>
<dbReference type="PANTHER" id="PTHR31375">
    <property type="match status" value="1"/>
</dbReference>
<dbReference type="Pfam" id="PF00295">
    <property type="entry name" value="Glyco_hydro_28"/>
    <property type="match status" value="1"/>
</dbReference>
<dbReference type="SMART" id="SM00710">
    <property type="entry name" value="PbH1"/>
    <property type="match status" value="6"/>
</dbReference>
<dbReference type="SUPFAM" id="SSF51126">
    <property type="entry name" value="Pectin lyase-like"/>
    <property type="match status" value="1"/>
</dbReference>
<dbReference type="PROSITE" id="PS00502">
    <property type="entry name" value="POLYGALACTURONASE"/>
    <property type="match status" value="1"/>
</dbReference>
<protein>
    <recommendedName>
        <fullName>Polygalacturonase</fullName>
        <shortName>PG</shortName>
        <ecNumber>3.2.1.15</ecNumber>
    </recommendedName>
    <alternativeName>
        <fullName>Pectinase</fullName>
    </alternativeName>
</protein>
<keyword id="KW-0134">Cell wall</keyword>
<keyword id="KW-0961">Cell wall biogenesis/degradation</keyword>
<keyword id="KW-1015">Disulfide bond</keyword>
<keyword id="KW-0292">Fruit ripening</keyword>
<keyword id="KW-0325">Glycoprotein</keyword>
<keyword id="KW-0326">Glycosidase</keyword>
<keyword id="KW-0378">Hydrolase</keyword>
<keyword id="KW-0677">Repeat</keyword>
<keyword id="KW-0964">Secreted</keyword>
<keyword id="KW-0732">Signal</keyword>
<evidence type="ECO:0000250" key="1">
    <source>
        <dbReference type="UniProtKB" id="O74213"/>
    </source>
</evidence>
<evidence type="ECO:0000255" key="2"/>
<evidence type="ECO:0000255" key="3">
    <source>
        <dbReference type="PROSITE-ProRule" id="PRU00498"/>
    </source>
</evidence>
<evidence type="ECO:0000255" key="4">
    <source>
        <dbReference type="PROSITE-ProRule" id="PRU10052"/>
    </source>
</evidence>
<evidence type="ECO:0000305" key="5"/>